<organism>
    <name type="scientific">Burkholderia ambifaria (strain ATCC BAA-244 / DSM 16087 / CCUG 44356 / LMG 19182 / AMMD)</name>
    <name type="common">Burkholderia cepacia (strain AMMD)</name>
    <dbReference type="NCBI Taxonomy" id="339670"/>
    <lineage>
        <taxon>Bacteria</taxon>
        <taxon>Pseudomonadati</taxon>
        <taxon>Pseudomonadota</taxon>
        <taxon>Betaproteobacteria</taxon>
        <taxon>Burkholderiales</taxon>
        <taxon>Burkholderiaceae</taxon>
        <taxon>Burkholderia</taxon>
        <taxon>Burkholderia cepacia complex</taxon>
    </lineage>
</organism>
<protein>
    <recommendedName>
        <fullName evidence="1">Chaperone protein HtpG</fullName>
    </recommendedName>
    <alternativeName>
        <fullName evidence="1">Heat shock protein HtpG</fullName>
    </alternativeName>
    <alternativeName>
        <fullName evidence="1">High temperature protein G</fullName>
    </alternativeName>
</protein>
<evidence type="ECO:0000255" key="1">
    <source>
        <dbReference type="HAMAP-Rule" id="MF_00505"/>
    </source>
</evidence>
<dbReference type="EMBL" id="CP000440">
    <property type="protein sequence ID" value="ABI87939.1"/>
    <property type="molecule type" value="Genomic_DNA"/>
</dbReference>
<dbReference type="RefSeq" id="WP_011657562.1">
    <property type="nucleotide sequence ID" value="NC_008390.1"/>
</dbReference>
<dbReference type="SMR" id="Q0BD34"/>
<dbReference type="GeneID" id="93085409"/>
<dbReference type="KEGG" id="bam:Bamb_2383"/>
<dbReference type="PATRIC" id="fig|339670.21.peg.2539"/>
<dbReference type="eggNOG" id="COG0326">
    <property type="taxonomic scope" value="Bacteria"/>
</dbReference>
<dbReference type="Proteomes" id="UP000000662">
    <property type="component" value="Chromosome 1"/>
</dbReference>
<dbReference type="GO" id="GO:0005737">
    <property type="term" value="C:cytoplasm"/>
    <property type="evidence" value="ECO:0007669"/>
    <property type="project" value="UniProtKB-SubCell"/>
</dbReference>
<dbReference type="GO" id="GO:0005524">
    <property type="term" value="F:ATP binding"/>
    <property type="evidence" value="ECO:0007669"/>
    <property type="project" value="UniProtKB-UniRule"/>
</dbReference>
<dbReference type="GO" id="GO:0016887">
    <property type="term" value="F:ATP hydrolysis activity"/>
    <property type="evidence" value="ECO:0007669"/>
    <property type="project" value="InterPro"/>
</dbReference>
<dbReference type="GO" id="GO:0140662">
    <property type="term" value="F:ATP-dependent protein folding chaperone"/>
    <property type="evidence" value="ECO:0007669"/>
    <property type="project" value="InterPro"/>
</dbReference>
<dbReference type="GO" id="GO:0051082">
    <property type="term" value="F:unfolded protein binding"/>
    <property type="evidence" value="ECO:0007669"/>
    <property type="project" value="UniProtKB-UniRule"/>
</dbReference>
<dbReference type="CDD" id="cd16927">
    <property type="entry name" value="HATPase_Hsp90-like"/>
    <property type="match status" value="1"/>
</dbReference>
<dbReference type="FunFam" id="3.30.230.80:FF:000002">
    <property type="entry name" value="Molecular chaperone HtpG"/>
    <property type="match status" value="1"/>
</dbReference>
<dbReference type="FunFam" id="3.30.565.10:FF:000009">
    <property type="entry name" value="Molecular chaperone HtpG"/>
    <property type="match status" value="1"/>
</dbReference>
<dbReference type="Gene3D" id="3.30.230.80">
    <property type="match status" value="1"/>
</dbReference>
<dbReference type="Gene3D" id="3.40.50.11260">
    <property type="match status" value="1"/>
</dbReference>
<dbReference type="Gene3D" id="1.20.120.790">
    <property type="entry name" value="Heat shock protein 90, C-terminal domain"/>
    <property type="match status" value="1"/>
</dbReference>
<dbReference type="Gene3D" id="3.30.565.10">
    <property type="entry name" value="Histidine kinase-like ATPase, C-terminal domain"/>
    <property type="match status" value="1"/>
</dbReference>
<dbReference type="HAMAP" id="MF_00505">
    <property type="entry name" value="HSP90"/>
    <property type="match status" value="1"/>
</dbReference>
<dbReference type="InterPro" id="IPR036890">
    <property type="entry name" value="HATPase_C_sf"/>
</dbReference>
<dbReference type="InterPro" id="IPR019805">
    <property type="entry name" value="Heat_shock_protein_90_CS"/>
</dbReference>
<dbReference type="InterPro" id="IPR037196">
    <property type="entry name" value="HSP90_C"/>
</dbReference>
<dbReference type="InterPro" id="IPR001404">
    <property type="entry name" value="Hsp90_fam"/>
</dbReference>
<dbReference type="InterPro" id="IPR020575">
    <property type="entry name" value="Hsp90_N"/>
</dbReference>
<dbReference type="InterPro" id="IPR020568">
    <property type="entry name" value="Ribosomal_Su5_D2-typ_SF"/>
</dbReference>
<dbReference type="NCBIfam" id="NF003555">
    <property type="entry name" value="PRK05218.1"/>
    <property type="match status" value="1"/>
</dbReference>
<dbReference type="PANTHER" id="PTHR11528">
    <property type="entry name" value="HEAT SHOCK PROTEIN 90 FAMILY MEMBER"/>
    <property type="match status" value="1"/>
</dbReference>
<dbReference type="Pfam" id="PF13589">
    <property type="entry name" value="HATPase_c_3"/>
    <property type="match status" value="1"/>
</dbReference>
<dbReference type="Pfam" id="PF00183">
    <property type="entry name" value="HSP90"/>
    <property type="match status" value="1"/>
</dbReference>
<dbReference type="PIRSF" id="PIRSF002583">
    <property type="entry name" value="Hsp90"/>
    <property type="match status" value="1"/>
</dbReference>
<dbReference type="PRINTS" id="PR00775">
    <property type="entry name" value="HEATSHOCK90"/>
</dbReference>
<dbReference type="SMART" id="SM00387">
    <property type="entry name" value="HATPase_c"/>
    <property type="match status" value="1"/>
</dbReference>
<dbReference type="SUPFAM" id="SSF55874">
    <property type="entry name" value="ATPase domain of HSP90 chaperone/DNA topoisomerase II/histidine kinase"/>
    <property type="match status" value="1"/>
</dbReference>
<dbReference type="SUPFAM" id="SSF110942">
    <property type="entry name" value="HSP90 C-terminal domain"/>
    <property type="match status" value="1"/>
</dbReference>
<dbReference type="SUPFAM" id="SSF54211">
    <property type="entry name" value="Ribosomal protein S5 domain 2-like"/>
    <property type="match status" value="1"/>
</dbReference>
<dbReference type="PROSITE" id="PS00298">
    <property type="entry name" value="HSP90"/>
    <property type="match status" value="1"/>
</dbReference>
<reference key="1">
    <citation type="submission" date="2006-08" db="EMBL/GenBank/DDBJ databases">
        <title>Complete sequence of chromosome 1 of Burkholderia cepacia AMMD.</title>
        <authorList>
            <person name="Copeland A."/>
            <person name="Lucas S."/>
            <person name="Lapidus A."/>
            <person name="Barry K."/>
            <person name="Detter J.C."/>
            <person name="Glavina del Rio T."/>
            <person name="Hammon N."/>
            <person name="Israni S."/>
            <person name="Pitluck S."/>
            <person name="Bruce D."/>
            <person name="Chain P."/>
            <person name="Malfatti S."/>
            <person name="Shin M."/>
            <person name="Vergez L."/>
            <person name="Schmutz J."/>
            <person name="Larimer F."/>
            <person name="Land M."/>
            <person name="Hauser L."/>
            <person name="Kyrpides N."/>
            <person name="Kim E."/>
            <person name="Parke J."/>
            <person name="Coenye T."/>
            <person name="Konstantinidis K."/>
            <person name="Ramette A."/>
            <person name="Tiedje J."/>
            <person name="Richardson P."/>
        </authorList>
    </citation>
    <scope>NUCLEOTIDE SEQUENCE [LARGE SCALE GENOMIC DNA]</scope>
    <source>
        <strain>ATCC BAA-244 / DSM 16087 / CCUG 44356 / LMG 19182 / AMMD</strain>
    </source>
</reference>
<gene>
    <name evidence="1" type="primary">htpG</name>
    <name type="ordered locus">Bamb_2383</name>
</gene>
<name>HTPG_BURCM</name>
<keyword id="KW-0067">ATP-binding</keyword>
<keyword id="KW-0143">Chaperone</keyword>
<keyword id="KW-0963">Cytoplasm</keyword>
<keyword id="KW-0547">Nucleotide-binding</keyword>
<keyword id="KW-0346">Stress response</keyword>
<proteinExistence type="inferred from homology"/>
<accession>Q0BD34</accession>
<feature type="chain" id="PRO_1000014900" description="Chaperone protein HtpG">
    <location>
        <begin position="1"/>
        <end position="632"/>
    </location>
</feature>
<feature type="region of interest" description="A; substrate-binding" evidence="1">
    <location>
        <begin position="1"/>
        <end position="339"/>
    </location>
</feature>
<feature type="region of interest" description="B" evidence="1">
    <location>
        <begin position="340"/>
        <end position="559"/>
    </location>
</feature>
<feature type="region of interest" description="C" evidence="1">
    <location>
        <begin position="560"/>
        <end position="632"/>
    </location>
</feature>
<comment type="function">
    <text evidence="1">Molecular chaperone. Has ATPase activity.</text>
</comment>
<comment type="subunit">
    <text evidence="1">Homodimer.</text>
</comment>
<comment type="subcellular location">
    <subcellularLocation>
        <location evidence="1">Cytoplasm</location>
    </subcellularLocation>
</comment>
<comment type="similarity">
    <text evidence="1">Belongs to the heat shock protein 90 family.</text>
</comment>
<sequence length="632" mass="71182">MAHETMSFQAEVKQLLHLMIHSLYSNKEIFLRELVSNASDAADKLRFEGLADNALYENDPNLRIRIGFDKAARTITIDDNGIGMSRDEAIANLGTIARSGTKEFFTKLSGDQQKDAALIGQFGVGFYSGFIVADKITVETRRAGLPANEAVRWESAGEGDFTIDAIERAQRGTTITLHLREGEDELLSSHRLKSIIQKYSDHIALPILMQKEEWDQEKGEMVLKDEDETVNQASALWTRSKSDITDEQYTQFYQHVAHDHQDPLTWTHNRVEGRSEYTQLLFVPAHAPFDLWNRDYRGGLKLYVKRVFIMDDAEQLLPQYLRFVKGVVDSADLPLNVSREILQESRDVKAIREGVTKRALSMLEELANAEEEAGKEKYKTFWSAFGQVLKEGLGEDHANRERIAKLLRFASTHGDTDAQDVSLADYVSRMKPEQSKIYYVTADTWQAAKNSPHLEVFRKKGVEVLLLTDRVDEWMLSFLHEFDGKPLASVARGDLDLGELNDEEKKAQEQAGEAIKPVVEKMKEALGDKVKEVRVTFRLTDSPSCLVADDNDMSGYLQRMLKAAGQNAPAMQPILEINPEHALVKQLNADSASFGDWCHLLFDQALLAEGGMLDDPASFVKRTNALLLSRAA</sequence>